<evidence type="ECO:0000255" key="1">
    <source>
        <dbReference type="HAMAP-Rule" id="MF_00063"/>
    </source>
</evidence>
<organism>
    <name type="scientific">Vibrio parahaemolyticus serotype O3:K6 (strain RIMD 2210633)</name>
    <dbReference type="NCBI Taxonomy" id="223926"/>
    <lineage>
        <taxon>Bacteria</taxon>
        <taxon>Pseudomonadati</taxon>
        <taxon>Pseudomonadota</taxon>
        <taxon>Gammaproteobacteria</taxon>
        <taxon>Vibrionales</taxon>
        <taxon>Vibrionaceae</taxon>
        <taxon>Vibrio</taxon>
    </lineage>
</organism>
<comment type="function">
    <text evidence="1">Catalyzes the formation of sulfite from phosphoadenosine 5'-phosphosulfate (PAPS) using thioredoxin as an electron donor.</text>
</comment>
<comment type="catalytic activity">
    <reaction evidence="1">
        <text>[thioredoxin]-disulfide + sulfite + adenosine 3',5'-bisphosphate + 2 H(+) = [thioredoxin]-dithiol + 3'-phosphoadenylyl sulfate</text>
        <dbReference type="Rhea" id="RHEA:11724"/>
        <dbReference type="Rhea" id="RHEA-COMP:10698"/>
        <dbReference type="Rhea" id="RHEA-COMP:10700"/>
        <dbReference type="ChEBI" id="CHEBI:15378"/>
        <dbReference type="ChEBI" id="CHEBI:17359"/>
        <dbReference type="ChEBI" id="CHEBI:29950"/>
        <dbReference type="ChEBI" id="CHEBI:50058"/>
        <dbReference type="ChEBI" id="CHEBI:58339"/>
        <dbReference type="ChEBI" id="CHEBI:58343"/>
        <dbReference type="EC" id="1.8.4.8"/>
    </reaction>
</comment>
<comment type="pathway">
    <text evidence="1">Sulfur metabolism; hydrogen sulfide biosynthesis; sulfite from sulfate: step 3/3.</text>
</comment>
<comment type="subcellular location">
    <subcellularLocation>
        <location evidence="1">Cytoplasm</location>
    </subcellularLocation>
</comment>
<comment type="similarity">
    <text evidence="1">Belongs to the PAPS reductase family. CysH subfamily.</text>
</comment>
<name>CYSH_VIBPA</name>
<dbReference type="EC" id="1.8.4.8" evidence="1"/>
<dbReference type="EMBL" id="BA000031">
    <property type="protein sequence ID" value="BAC60983.1"/>
    <property type="molecule type" value="Genomic_DNA"/>
</dbReference>
<dbReference type="RefSeq" id="NP_799099.1">
    <property type="nucleotide sequence ID" value="NC_004603.1"/>
</dbReference>
<dbReference type="RefSeq" id="WP_005477371.1">
    <property type="nucleotide sequence ID" value="NC_004603.1"/>
</dbReference>
<dbReference type="SMR" id="Q87L92"/>
<dbReference type="GeneID" id="1190270"/>
<dbReference type="KEGG" id="vpa:VP2720"/>
<dbReference type="PATRIC" id="fig|223926.6.peg.2618"/>
<dbReference type="eggNOG" id="COG0175">
    <property type="taxonomic scope" value="Bacteria"/>
</dbReference>
<dbReference type="HOGENOM" id="CLU_044089_3_0_6"/>
<dbReference type="UniPathway" id="UPA00140">
    <property type="reaction ID" value="UER00206"/>
</dbReference>
<dbReference type="Proteomes" id="UP000002493">
    <property type="component" value="Chromosome 1"/>
</dbReference>
<dbReference type="GO" id="GO:0005737">
    <property type="term" value="C:cytoplasm"/>
    <property type="evidence" value="ECO:0007669"/>
    <property type="project" value="UniProtKB-SubCell"/>
</dbReference>
<dbReference type="GO" id="GO:0004604">
    <property type="term" value="F:phosphoadenylyl-sulfate reductase (thioredoxin) activity"/>
    <property type="evidence" value="ECO:0007669"/>
    <property type="project" value="UniProtKB-UniRule"/>
</dbReference>
<dbReference type="GO" id="GO:0070814">
    <property type="term" value="P:hydrogen sulfide biosynthetic process"/>
    <property type="evidence" value="ECO:0007669"/>
    <property type="project" value="UniProtKB-UniRule"/>
</dbReference>
<dbReference type="GO" id="GO:0019379">
    <property type="term" value="P:sulfate assimilation, phosphoadenylyl sulfate reduction by phosphoadenylyl-sulfate reductase (thioredoxin)"/>
    <property type="evidence" value="ECO:0007669"/>
    <property type="project" value="UniProtKB-UniRule"/>
</dbReference>
<dbReference type="CDD" id="cd23945">
    <property type="entry name" value="PAPS_reductase"/>
    <property type="match status" value="1"/>
</dbReference>
<dbReference type="FunFam" id="3.40.50.620:FF:000043">
    <property type="entry name" value="Phosphoadenosine phosphosulfate reductase"/>
    <property type="match status" value="1"/>
</dbReference>
<dbReference type="Gene3D" id="3.40.50.620">
    <property type="entry name" value="HUPs"/>
    <property type="match status" value="1"/>
</dbReference>
<dbReference type="HAMAP" id="MF_00063">
    <property type="entry name" value="CysH"/>
    <property type="match status" value="1"/>
</dbReference>
<dbReference type="InterPro" id="IPR004511">
    <property type="entry name" value="PAPS/APS_Rdtase"/>
</dbReference>
<dbReference type="InterPro" id="IPR002500">
    <property type="entry name" value="PAPS_reduct_dom"/>
</dbReference>
<dbReference type="InterPro" id="IPR011800">
    <property type="entry name" value="PAPS_reductase_CysH"/>
</dbReference>
<dbReference type="InterPro" id="IPR014729">
    <property type="entry name" value="Rossmann-like_a/b/a_fold"/>
</dbReference>
<dbReference type="NCBIfam" id="TIGR00434">
    <property type="entry name" value="cysH"/>
    <property type="match status" value="1"/>
</dbReference>
<dbReference type="NCBIfam" id="TIGR02057">
    <property type="entry name" value="PAPS_reductase"/>
    <property type="match status" value="1"/>
</dbReference>
<dbReference type="NCBIfam" id="NF002537">
    <property type="entry name" value="PRK02090.1"/>
    <property type="match status" value="1"/>
</dbReference>
<dbReference type="PANTHER" id="PTHR46509">
    <property type="entry name" value="PHOSPHOADENOSINE PHOSPHOSULFATE REDUCTASE"/>
    <property type="match status" value="1"/>
</dbReference>
<dbReference type="PANTHER" id="PTHR46509:SF1">
    <property type="entry name" value="PHOSPHOADENOSINE PHOSPHOSULFATE REDUCTASE"/>
    <property type="match status" value="1"/>
</dbReference>
<dbReference type="Pfam" id="PF01507">
    <property type="entry name" value="PAPS_reduct"/>
    <property type="match status" value="1"/>
</dbReference>
<dbReference type="PIRSF" id="PIRSF000857">
    <property type="entry name" value="PAPS_reductase"/>
    <property type="match status" value="1"/>
</dbReference>
<dbReference type="SUPFAM" id="SSF52402">
    <property type="entry name" value="Adenine nucleotide alpha hydrolases-like"/>
    <property type="match status" value="1"/>
</dbReference>
<sequence length="259" mass="29762">MLDSVASKPELAELLTLTKTEQILRLAQINVELEPLSAQERVKWALENLDGEFAVSSSFGIQAAVMLHLVTQEKPDIPIILTDTGYLFAETYRFIDELTEKLNLNLKVYRAEQSAQWQEARYGKLWEQGVEGIEKYNKINKVEPMRRALKELNVGTWFSGLRREQSKSRAGLPILSIQNGVFKFLPVIDWTNKDVHYYLEQHGLTYHPLWEEGYLSVGDTHTTRKWEPGMSEEETRFFGLKRECGLHEDDGNEQDGSGI</sequence>
<keyword id="KW-0963">Cytoplasm</keyword>
<keyword id="KW-0560">Oxidoreductase</keyword>
<proteinExistence type="inferred from homology"/>
<feature type="chain" id="PRO_0000100653" description="Phosphoadenosine 5'-phosphosulfate reductase">
    <location>
        <begin position="1"/>
        <end position="259"/>
    </location>
</feature>
<feature type="active site" description="Nucleophile; cysteine thiosulfonate intermediate" evidence="1">
    <location>
        <position position="244"/>
    </location>
</feature>
<accession>Q87L92</accession>
<gene>
    <name evidence="1" type="primary">cysH</name>
    <name type="ordered locus">VP2720</name>
</gene>
<protein>
    <recommendedName>
        <fullName evidence="1">Phosphoadenosine 5'-phosphosulfate reductase</fullName>
        <shortName evidence="1">PAPS reductase</shortName>
        <ecNumber evidence="1">1.8.4.8</ecNumber>
    </recommendedName>
    <alternativeName>
        <fullName evidence="1">3'-phosphoadenylylsulfate reductase</fullName>
    </alternativeName>
    <alternativeName>
        <fullName evidence="1">PAPS reductase, thioredoxin dependent</fullName>
    </alternativeName>
    <alternativeName>
        <fullName evidence="1">PAPS sulfotransferase</fullName>
    </alternativeName>
    <alternativeName>
        <fullName evidence="1">PAdoPS reductase</fullName>
    </alternativeName>
</protein>
<reference key="1">
    <citation type="journal article" date="2003" name="Lancet">
        <title>Genome sequence of Vibrio parahaemolyticus: a pathogenic mechanism distinct from that of V. cholerae.</title>
        <authorList>
            <person name="Makino K."/>
            <person name="Oshima K."/>
            <person name="Kurokawa K."/>
            <person name="Yokoyama K."/>
            <person name="Uda T."/>
            <person name="Tagomori K."/>
            <person name="Iijima Y."/>
            <person name="Najima M."/>
            <person name="Nakano M."/>
            <person name="Yamashita A."/>
            <person name="Kubota Y."/>
            <person name="Kimura S."/>
            <person name="Yasunaga T."/>
            <person name="Honda T."/>
            <person name="Shinagawa H."/>
            <person name="Hattori M."/>
            <person name="Iida T."/>
        </authorList>
    </citation>
    <scope>NUCLEOTIDE SEQUENCE [LARGE SCALE GENOMIC DNA]</scope>
    <source>
        <strain>RIMD 2210633</strain>
    </source>
</reference>